<keyword id="KW-0418">Kinase</keyword>
<keyword id="KW-0547">Nucleotide-binding</keyword>
<keyword id="KW-0723">Serine/threonine-protein kinase</keyword>
<keyword id="KW-0808">Transferase</keyword>
<organism>
    <name type="scientific">Burkholderia vietnamiensis (strain G4 / LMG 22486)</name>
    <name type="common">Burkholderia cepacia (strain R1808)</name>
    <dbReference type="NCBI Taxonomy" id="269482"/>
    <lineage>
        <taxon>Bacteria</taxon>
        <taxon>Pseudomonadati</taxon>
        <taxon>Pseudomonadota</taxon>
        <taxon>Betaproteobacteria</taxon>
        <taxon>Burkholderiales</taxon>
        <taxon>Burkholderiaceae</taxon>
        <taxon>Burkholderia</taxon>
        <taxon>Burkholderia cepacia complex</taxon>
    </lineage>
</organism>
<reference key="1">
    <citation type="submission" date="2007-03" db="EMBL/GenBank/DDBJ databases">
        <title>Complete sequence of chromosome 1 of Burkholderia vietnamiensis G4.</title>
        <authorList>
            <consortium name="US DOE Joint Genome Institute"/>
            <person name="Copeland A."/>
            <person name="Lucas S."/>
            <person name="Lapidus A."/>
            <person name="Barry K."/>
            <person name="Detter J.C."/>
            <person name="Glavina del Rio T."/>
            <person name="Hammon N."/>
            <person name="Israni S."/>
            <person name="Dalin E."/>
            <person name="Tice H."/>
            <person name="Pitluck S."/>
            <person name="Chain P."/>
            <person name="Malfatti S."/>
            <person name="Shin M."/>
            <person name="Vergez L."/>
            <person name="Schmutz J."/>
            <person name="Larimer F."/>
            <person name="Land M."/>
            <person name="Hauser L."/>
            <person name="Kyrpides N."/>
            <person name="Tiedje J."/>
            <person name="Richardson P."/>
        </authorList>
    </citation>
    <scope>NUCLEOTIDE SEQUENCE [LARGE SCALE GENOMIC DNA]</scope>
    <source>
        <strain>G4 / LMG 22486</strain>
    </source>
</reference>
<proteinExistence type="inferred from homology"/>
<sequence length="271" mass="30709">MLPTVFIVSDGTGITAETFAHSILSQFDQKFRLVRVPFVDSLEKAYSTVEKINEAAVHDGRRAIVFTTLVDSVSNDIVKRSNALVLDMFQRFVEPLEQELELKSSHAMGRGHQNADTEEYKTRIEAINFSLAHDDGQSNRNLSEADVILVGVSRSGKTPTSLYLAMQYGVKAANYPLIPEDFERGKLPSALTQHREKLFGLSIDPQRLSEIRNERRPGSKYAAPENCRYEINESEAMMRREGIKWLSSTHKSIEEIATTILQEIRLERQSY</sequence>
<name>PSRP_BURVG</name>
<evidence type="ECO:0000255" key="1">
    <source>
        <dbReference type="HAMAP-Rule" id="MF_01062"/>
    </source>
</evidence>
<dbReference type="EC" id="2.7.11.33" evidence="1"/>
<dbReference type="EC" id="2.7.4.28" evidence="1"/>
<dbReference type="EMBL" id="CP000614">
    <property type="protein sequence ID" value="ABO54912.1"/>
    <property type="molecule type" value="Genomic_DNA"/>
</dbReference>
<dbReference type="SMR" id="A4JF59"/>
<dbReference type="KEGG" id="bvi:Bcep1808_1909"/>
<dbReference type="eggNOG" id="COG1806">
    <property type="taxonomic scope" value="Bacteria"/>
</dbReference>
<dbReference type="HOGENOM" id="CLU_046206_1_0_4"/>
<dbReference type="Proteomes" id="UP000002287">
    <property type="component" value="Chromosome 1"/>
</dbReference>
<dbReference type="GO" id="GO:0043531">
    <property type="term" value="F:ADP binding"/>
    <property type="evidence" value="ECO:0007669"/>
    <property type="project" value="UniProtKB-UniRule"/>
</dbReference>
<dbReference type="GO" id="GO:0005524">
    <property type="term" value="F:ATP binding"/>
    <property type="evidence" value="ECO:0007669"/>
    <property type="project" value="InterPro"/>
</dbReference>
<dbReference type="GO" id="GO:0016776">
    <property type="term" value="F:phosphotransferase activity, phosphate group as acceptor"/>
    <property type="evidence" value="ECO:0007669"/>
    <property type="project" value="UniProtKB-UniRule"/>
</dbReference>
<dbReference type="GO" id="GO:0004674">
    <property type="term" value="F:protein serine/threonine kinase activity"/>
    <property type="evidence" value="ECO:0007669"/>
    <property type="project" value="UniProtKB-UniRule"/>
</dbReference>
<dbReference type="HAMAP" id="MF_01062">
    <property type="entry name" value="PSRP"/>
    <property type="match status" value="1"/>
</dbReference>
<dbReference type="InterPro" id="IPR005177">
    <property type="entry name" value="Kinase-pyrophosphorylase"/>
</dbReference>
<dbReference type="InterPro" id="IPR026530">
    <property type="entry name" value="PSRP"/>
</dbReference>
<dbReference type="NCBIfam" id="NF003742">
    <property type="entry name" value="PRK05339.1"/>
    <property type="match status" value="1"/>
</dbReference>
<dbReference type="PANTHER" id="PTHR31756">
    <property type="entry name" value="PYRUVATE, PHOSPHATE DIKINASE REGULATORY PROTEIN 1, CHLOROPLASTIC"/>
    <property type="match status" value="1"/>
</dbReference>
<dbReference type="PANTHER" id="PTHR31756:SF3">
    <property type="entry name" value="PYRUVATE, PHOSPHATE DIKINASE REGULATORY PROTEIN 1, CHLOROPLASTIC"/>
    <property type="match status" value="1"/>
</dbReference>
<dbReference type="Pfam" id="PF03618">
    <property type="entry name" value="Kinase-PPPase"/>
    <property type="match status" value="1"/>
</dbReference>
<feature type="chain" id="PRO_0000316655" description="Putative phosphoenolpyruvate synthase regulatory protein">
    <location>
        <begin position="1"/>
        <end position="271"/>
    </location>
</feature>
<feature type="binding site" evidence="1">
    <location>
        <begin position="151"/>
        <end position="158"/>
    </location>
    <ligand>
        <name>ADP</name>
        <dbReference type="ChEBI" id="CHEBI:456216"/>
    </ligand>
</feature>
<accession>A4JF59</accession>
<comment type="function">
    <text evidence="1">Bifunctional serine/threonine kinase and phosphorylase involved in the regulation of the phosphoenolpyruvate synthase (PEPS) by catalyzing its phosphorylation/dephosphorylation.</text>
</comment>
<comment type="catalytic activity">
    <reaction evidence="1">
        <text>[pyruvate, water dikinase] + ADP = [pyruvate, water dikinase]-phosphate + AMP + H(+)</text>
        <dbReference type="Rhea" id="RHEA:46020"/>
        <dbReference type="Rhea" id="RHEA-COMP:11425"/>
        <dbReference type="Rhea" id="RHEA-COMP:11426"/>
        <dbReference type="ChEBI" id="CHEBI:15378"/>
        <dbReference type="ChEBI" id="CHEBI:43176"/>
        <dbReference type="ChEBI" id="CHEBI:68546"/>
        <dbReference type="ChEBI" id="CHEBI:456215"/>
        <dbReference type="ChEBI" id="CHEBI:456216"/>
        <dbReference type="EC" id="2.7.11.33"/>
    </reaction>
</comment>
<comment type="catalytic activity">
    <reaction evidence="1">
        <text>[pyruvate, water dikinase]-phosphate + phosphate + H(+) = [pyruvate, water dikinase] + diphosphate</text>
        <dbReference type="Rhea" id="RHEA:48580"/>
        <dbReference type="Rhea" id="RHEA-COMP:11425"/>
        <dbReference type="Rhea" id="RHEA-COMP:11426"/>
        <dbReference type="ChEBI" id="CHEBI:15378"/>
        <dbReference type="ChEBI" id="CHEBI:33019"/>
        <dbReference type="ChEBI" id="CHEBI:43176"/>
        <dbReference type="ChEBI" id="CHEBI:43474"/>
        <dbReference type="ChEBI" id="CHEBI:68546"/>
        <dbReference type="EC" id="2.7.4.28"/>
    </reaction>
</comment>
<comment type="similarity">
    <text evidence="1">Belongs to the pyruvate, phosphate/water dikinase regulatory protein family. PSRP subfamily.</text>
</comment>
<gene>
    <name type="ordered locus">Bcep1808_1909</name>
</gene>
<protein>
    <recommendedName>
        <fullName evidence="1">Putative phosphoenolpyruvate synthase regulatory protein</fullName>
        <shortName evidence="1">PEP synthase regulatory protein</shortName>
        <shortName evidence="1">PSRP</shortName>
        <ecNumber evidence="1">2.7.11.33</ecNumber>
        <ecNumber evidence="1">2.7.4.28</ecNumber>
    </recommendedName>
    <alternativeName>
        <fullName evidence="1">Pyruvate, water dikinase regulatory protein</fullName>
    </alternativeName>
</protein>